<reference key="1">
    <citation type="journal article" date="2005" name="J. Bacteriol.">
        <title>Insights on evolution of virulence and resistance from the complete genome analysis of an early methicillin-resistant Staphylococcus aureus strain and a biofilm-producing methicillin-resistant Staphylococcus epidermidis strain.</title>
        <authorList>
            <person name="Gill S.R."/>
            <person name="Fouts D.E."/>
            <person name="Archer G.L."/>
            <person name="Mongodin E.F."/>
            <person name="DeBoy R.T."/>
            <person name="Ravel J."/>
            <person name="Paulsen I.T."/>
            <person name="Kolonay J.F."/>
            <person name="Brinkac L.M."/>
            <person name="Beanan M.J."/>
            <person name="Dodson R.J."/>
            <person name="Daugherty S.C."/>
            <person name="Madupu R."/>
            <person name="Angiuoli S.V."/>
            <person name="Durkin A.S."/>
            <person name="Haft D.H."/>
            <person name="Vamathevan J.J."/>
            <person name="Khouri H."/>
            <person name="Utterback T.R."/>
            <person name="Lee C."/>
            <person name="Dimitrov G."/>
            <person name="Jiang L."/>
            <person name="Qin H."/>
            <person name="Weidman J."/>
            <person name="Tran K."/>
            <person name="Kang K.H."/>
            <person name="Hance I.R."/>
            <person name="Nelson K.E."/>
            <person name="Fraser C.M."/>
        </authorList>
    </citation>
    <scope>NUCLEOTIDE SEQUENCE [LARGE SCALE GENOMIC DNA]</scope>
    <source>
        <strain>COL</strain>
    </source>
</reference>
<proteinExistence type="inferred from homology"/>
<feature type="chain" id="PRO_0000173368" description="Quinolone resistance protein NorA">
    <location>
        <begin position="1"/>
        <end position="388"/>
    </location>
</feature>
<feature type="transmembrane region" description="Helical" evidence="2">
    <location>
        <begin position="5"/>
        <end position="25"/>
    </location>
</feature>
<feature type="transmembrane region" description="Helical" evidence="2">
    <location>
        <begin position="42"/>
        <end position="62"/>
    </location>
</feature>
<feature type="transmembrane region" description="Helical" evidence="2">
    <location>
        <begin position="69"/>
        <end position="89"/>
    </location>
</feature>
<feature type="transmembrane region" description="Helical" evidence="2">
    <location>
        <begin position="99"/>
        <end position="119"/>
    </location>
</feature>
<feature type="transmembrane region" description="Helical" evidence="2">
    <location>
        <begin position="129"/>
        <end position="149"/>
    </location>
</feature>
<feature type="transmembrane region" description="Helical" evidence="2">
    <location>
        <begin position="157"/>
        <end position="177"/>
    </location>
</feature>
<feature type="transmembrane region" description="Helical" evidence="2">
    <location>
        <begin position="201"/>
        <end position="221"/>
    </location>
</feature>
<feature type="transmembrane region" description="Helical" evidence="2">
    <location>
        <begin position="239"/>
        <end position="259"/>
    </location>
</feature>
<feature type="transmembrane region" description="Helical" evidence="2">
    <location>
        <begin position="269"/>
        <end position="289"/>
    </location>
</feature>
<feature type="transmembrane region" description="Helical" evidence="2">
    <location>
        <begin position="293"/>
        <end position="313"/>
    </location>
</feature>
<feature type="transmembrane region" description="Helical" evidence="2">
    <location>
        <begin position="331"/>
        <end position="351"/>
    </location>
</feature>
<feature type="transmembrane region" description="Helical" evidence="2">
    <location>
        <begin position="355"/>
        <end position="375"/>
    </location>
</feature>
<keyword id="KW-1003">Cell membrane</keyword>
<keyword id="KW-0472">Membrane</keyword>
<keyword id="KW-0812">Transmembrane</keyword>
<keyword id="KW-1133">Transmembrane helix</keyword>
<keyword id="KW-0813">Transport</keyword>
<name>NORA_STAAC</name>
<protein>
    <recommendedName>
        <fullName>Quinolone resistance protein NorA</fullName>
    </recommendedName>
</protein>
<evidence type="ECO:0000250" key="1"/>
<evidence type="ECO:0000255" key="2"/>
<evidence type="ECO:0000305" key="3"/>
<comment type="function">
    <text evidence="1">Involved in quinolone resistance. May constitute a membrane-associated active efflux pump of hydrophilic quinolones (By similarity).</text>
</comment>
<comment type="subcellular location">
    <subcellularLocation>
        <location evidence="3">Cell membrane</location>
        <topology evidence="3">Multi-pass membrane protein</topology>
    </subcellularLocation>
</comment>
<comment type="similarity">
    <text evidence="3">Belongs to the major facilitator superfamily. TCR/Tet family.</text>
</comment>
<sequence>MNKQIFVLYFNIFLIFLGIGLVIPVLPVYLKDLGLTGSDLGLLVAAFALSQMIISPFGGTLADKLGKKLIICIGLILFSVSEFMFAVGHNFSVLMLSRVIGGMSAGMVMPGVTGLIADISPSHQKAKNFGYMSAIINSGFILGPGIGGFMAEVSHRMPFYFAGALGILAFIMSIVLIHDPKKSTTSGFQKLEPQLLTKINWKVFITPVILTLVLSFGLSAFETLYSLYTADKVNYSPKDISIAITGGGIFGALFQIYFFDKFMKYFSELTFIAWSLLYSVVVLILLVFANDYWSIMLISFVVFIGFDMIRPAITNYFSNIAGERQGFAGGLNSTFTSMGNFIGPLIAGALFDVHIEAPIYMAIGVSLAGVVIVLIEKQHRAKLKEQNM</sequence>
<dbReference type="EMBL" id="CP000046">
    <property type="protein sequence ID" value="AAW37815.1"/>
    <property type="molecule type" value="Genomic_DNA"/>
</dbReference>
<dbReference type="RefSeq" id="WP_001041272.1">
    <property type="nucleotide sequence ID" value="NZ_JBGOFO010000005.1"/>
</dbReference>
<dbReference type="SMR" id="Q5HHX4"/>
<dbReference type="KEGG" id="sac:SACOL0754"/>
<dbReference type="HOGENOM" id="CLU_001265_10_11_9"/>
<dbReference type="Proteomes" id="UP000000530">
    <property type="component" value="Chromosome"/>
</dbReference>
<dbReference type="GO" id="GO:0005886">
    <property type="term" value="C:plasma membrane"/>
    <property type="evidence" value="ECO:0007669"/>
    <property type="project" value="UniProtKB-SubCell"/>
</dbReference>
<dbReference type="GO" id="GO:0042910">
    <property type="term" value="F:xenobiotic transmembrane transporter activity"/>
    <property type="evidence" value="ECO:0007669"/>
    <property type="project" value="InterPro"/>
</dbReference>
<dbReference type="CDD" id="cd17325">
    <property type="entry name" value="MFS_MdtG_SLC18_like"/>
    <property type="match status" value="1"/>
</dbReference>
<dbReference type="Gene3D" id="1.20.1250.20">
    <property type="entry name" value="MFS general substrate transporter like domains"/>
    <property type="match status" value="1"/>
</dbReference>
<dbReference type="InterPro" id="IPR011701">
    <property type="entry name" value="MFS"/>
</dbReference>
<dbReference type="InterPro" id="IPR020846">
    <property type="entry name" value="MFS_dom"/>
</dbReference>
<dbReference type="InterPro" id="IPR050189">
    <property type="entry name" value="MFS_Efflux_Transporters"/>
</dbReference>
<dbReference type="InterPro" id="IPR036259">
    <property type="entry name" value="MFS_trans_sf"/>
</dbReference>
<dbReference type="InterPro" id="IPR004734">
    <property type="entry name" value="Multidrug-R"/>
</dbReference>
<dbReference type="InterPro" id="IPR001958">
    <property type="entry name" value="Tet-R_TetA/multi-R_MdtG-like"/>
</dbReference>
<dbReference type="NCBIfam" id="TIGR00880">
    <property type="entry name" value="2_A_01_02"/>
    <property type="match status" value="1"/>
</dbReference>
<dbReference type="PANTHER" id="PTHR43124:SF3">
    <property type="entry name" value="CHLORAMPHENICOL EFFLUX PUMP RV0191"/>
    <property type="match status" value="1"/>
</dbReference>
<dbReference type="PANTHER" id="PTHR43124">
    <property type="entry name" value="PURINE EFFLUX PUMP PBUE"/>
    <property type="match status" value="1"/>
</dbReference>
<dbReference type="Pfam" id="PF07690">
    <property type="entry name" value="MFS_1"/>
    <property type="match status" value="1"/>
</dbReference>
<dbReference type="PRINTS" id="PR01035">
    <property type="entry name" value="TCRTETA"/>
</dbReference>
<dbReference type="SUPFAM" id="SSF103473">
    <property type="entry name" value="MFS general substrate transporter"/>
    <property type="match status" value="1"/>
</dbReference>
<dbReference type="PROSITE" id="PS50850">
    <property type="entry name" value="MFS"/>
    <property type="match status" value="1"/>
</dbReference>
<accession>Q5HHX4</accession>
<organism>
    <name type="scientific">Staphylococcus aureus (strain COL)</name>
    <dbReference type="NCBI Taxonomy" id="93062"/>
    <lineage>
        <taxon>Bacteria</taxon>
        <taxon>Bacillati</taxon>
        <taxon>Bacillota</taxon>
        <taxon>Bacilli</taxon>
        <taxon>Bacillales</taxon>
        <taxon>Staphylococcaceae</taxon>
        <taxon>Staphylococcus</taxon>
    </lineage>
</organism>
<gene>
    <name type="primary">norA</name>
    <name type="ordered locus">SACOL0754</name>
</gene>